<dbReference type="EMBL" id="BA000004">
    <property type="protein sequence ID" value="BAB06478.1"/>
    <property type="molecule type" value="Genomic_DNA"/>
</dbReference>
<dbReference type="PIR" id="G83994">
    <property type="entry name" value="G83994"/>
</dbReference>
<dbReference type="SMR" id="Q9K991"/>
<dbReference type="STRING" id="272558.gene:10728659"/>
<dbReference type="KEGG" id="bha:BH2759"/>
<dbReference type="eggNOG" id="ENOG502ZBVN">
    <property type="taxonomic scope" value="Bacteria"/>
</dbReference>
<dbReference type="HOGENOM" id="CLU_132521_0_0_9"/>
<dbReference type="Proteomes" id="UP000001258">
    <property type="component" value="Chromosome"/>
</dbReference>
<dbReference type="GO" id="GO:0045454">
    <property type="term" value="P:cell redox homeostasis"/>
    <property type="evidence" value="ECO:0000250"/>
    <property type="project" value="UniProtKB"/>
</dbReference>
<dbReference type="Gene3D" id="3.40.30.10">
    <property type="entry name" value="Glutaredoxin"/>
    <property type="match status" value="1"/>
</dbReference>
<dbReference type="InterPro" id="IPR009474">
    <property type="entry name" value="BrxB/BrxA"/>
</dbReference>
<dbReference type="NCBIfam" id="TIGR04191">
    <property type="entry name" value="YphP_YqiW"/>
    <property type="match status" value="1"/>
</dbReference>
<dbReference type="PANTHER" id="PTHR40052:SF1">
    <property type="entry name" value="BACILLIREDOXIN BRXB"/>
    <property type="match status" value="1"/>
</dbReference>
<dbReference type="PANTHER" id="PTHR40052">
    <property type="entry name" value="UPF0403 PROTEIN YQIW-RELATED"/>
    <property type="match status" value="1"/>
</dbReference>
<dbReference type="Pfam" id="PF06491">
    <property type="entry name" value="Disulph_isomer"/>
    <property type="match status" value="1"/>
</dbReference>
<keyword id="KW-1185">Reference proteome</keyword>
<protein>
    <recommendedName>
        <fullName evidence="1">Bacilliredoxin BH2759</fullName>
    </recommendedName>
</protein>
<sequence length="145" mass="16487">MYCRMEFNFFMNDVVQMARKEMVESGYDQLTTPEEVDEVLKEKGTVLVMVNSVCGCAGGIARPAAAYMKNYDKKPDRFVTVFAGQDKEATARAREYFKGYAPSSPSFALLKDGEIQMMVERHEIEGHEPIQVVQKLEKAFDQYCS</sequence>
<gene>
    <name type="ordered locus">BH2759</name>
</gene>
<organism>
    <name type="scientific">Halalkalibacterium halodurans (strain ATCC BAA-125 / DSM 18197 / FERM 7344 / JCM 9153 / C-125)</name>
    <name type="common">Bacillus halodurans</name>
    <dbReference type="NCBI Taxonomy" id="272558"/>
    <lineage>
        <taxon>Bacteria</taxon>
        <taxon>Bacillati</taxon>
        <taxon>Bacillota</taxon>
        <taxon>Bacilli</taxon>
        <taxon>Bacillales</taxon>
        <taxon>Bacillaceae</taxon>
        <taxon>Halalkalibacterium (ex Joshi et al. 2022)</taxon>
    </lineage>
</organism>
<accession>Q9K991</accession>
<comment type="similarity">
    <text evidence="1">Belongs to the bacilliredoxin family.</text>
</comment>
<reference key="1">
    <citation type="journal article" date="2000" name="Nucleic Acids Res.">
        <title>Complete genome sequence of the alkaliphilic bacterium Bacillus halodurans and genomic sequence comparison with Bacillus subtilis.</title>
        <authorList>
            <person name="Takami H."/>
            <person name="Nakasone K."/>
            <person name="Takaki Y."/>
            <person name="Maeno G."/>
            <person name="Sasaki R."/>
            <person name="Masui N."/>
            <person name="Fuji F."/>
            <person name="Hirama C."/>
            <person name="Nakamura Y."/>
            <person name="Ogasawara N."/>
            <person name="Kuhara S."/>
            <person name="Horikoshi K."/>
        </authorList>
    </citation>
    <scope>NUCLEOTIDE SEQUENCE [LARGE SCALE GENOMIC DNA]</scope>
    <source>
        <strain>ATCC BAA-125 / DSM 18197 / FERM 7344 / JCM 9153 / C-125</strain>
    </source>
</reference>
<name>Y2759_HALH5</name>
<evidence type="ECO:0000305" key="1"/>
<feature type="chain" id="PRO_0000271984" description="Bacilliredoxin BH2759">
    <location>
        <begin position="1"/>
        <end position="145"/>
    </location>
</feature>
<proteinExistence type="inferred from homology"/>